<gene>
    <name type="primary">PRL</name>
</gene>
<comment type="function">
    <text>Prolactin acts primarily on the mammary gland by promoting lactation.</text>
</comment>
<comment type="subunit">
    <text evidence="2">Interacts with PRLR.</text>
</comment>
<comment type="subcellular location">
    <subcellularLocation>
        <location>Secreted</location>
    </subcellularLocation>
</comment>
<comment type="similarity">
    <text evidence="4">Belongs to the somatotropin/prolactin family.</text>
</comment>
<keyword id="KW-1015">Disulfide bond</keyword>
<keyword id="KW-0372">Hormone</keyword>
<keyword id="KW-0421">Lactation</keyword>
<keyword id="KW-0597">Phosphoprotein</keyword>
<keyword id="KW-1185">Reference proteome</keyword>
<keyword id="KW-0964">Secreted</keyword>
<keyword id="KW-0732">Signal</keyword>
<feature type="signal peptide" evidence="1">
    <location>
        <begin position="1"/>
        <end position="30"/>
    </location>
</feature>
<feature type="chain" id="PRO_0000032912" description="Prolactin">
    <location>
        <begin position="31"/>
        <end position="229"/>
    </location>
</feature>
<feature type="modified residue" description="Phosphoserine" evidence="3">
    <location>
        <position position="56"/>
    </location>
</feature>
<feature type="modified residue" description="Phosphoserine" evidence="3">
    <location>
        <position position="64"/>
    </location>
</feature>
<feature type="modified residue" description="Phosphoserine" evidence="3">
    <location>
        <position position="120"/>
    </location>
</feature>
<feature type="disulfide bond" evidence="1">
    <location>
        <begin position="34"/>
        <end position="41"/>
    </location>
</feature>
<feature type="disulfide bond" evidence="1">
    <location>
        <begin position="88"/>
        <end position="204"/>
    </location>
</feature>
<feature type="disulfide bond" evidence="1">
    <location>
        <begin position="221"/>
        <end position="229"/>
    </location>
</feature>
<feature type="sequence variant">
    <original>L</original>
    <variation>F</variation>
    <location>
        <position position="164"/>
    </location>
</feature>
<accession>Q28318</accession>
<accession>Q28329</accession>
<reference key="1">
    <citation type="journal article" date="1994" name="Neuroendocrinology">
        <title>Prolactin gene expression in ovine and caprine mammary gland.</title>
        <authorList>
            <person name="le Provost F."/>
            <person name="Leroux C."/>
            <person name="Martin P."/>
            <person name="Gaye P."/>
            <person name="Djiane J."/>
        </authorList>
    </citation>
    <scope>NUCLEOTIDE SEQUENCE [MRNA]</scope>
</reference>
<sequence length="229" mass="25774">MDSKGSAQKGSRLLLLLVVSNLLLCQGVVSTPVCPNGPGNCQVSLRDLFDRAVMVSHYIHNLSSEMFNEFDKRYAQGKGYITMALNSCHTSSLPTPEDKEQAQQTHHEVLMSLILGLLRSWNDPLYHLVTEVRGMKGVPDAILSRAIEIEEENKRLLEGMEMILGQVIPGAKETEPYPVWSGLPSLQTKDEEARHSAFYNLLHCLRRDSSKIDTYLKLLNCRIIYNNNC</sequence>
<dbReference type="EMBL" id="X76049">
    <property type="protein sequence ID" value="CAA53634.1"/>
    <property type="molecule type" value="mRNA"/>
</dbReference>
<dbReference type="EMBL" id="X76048">
    <property type="protein sequence ID" value="CAA53633.1"/>
    <property type="molecule type" value="mRNA"/>
</dbReference>
<dbReference type="PIR" id="I83982">
    <property type="entry name" value="I83982"/>
</dbReference>
<dbReference type="RefSeq" id="NP_001272476.1">
    <property type="nucleotide sequence ID" value="NM_001285547.1"/>
</dbReference>
<dbReference type="SMR" id="Q28318"/>
<dbReference type="GeneID" id="100861193"/>
<dbReference type="CTD" id="100861193"/>
<dbReference type="Proteomes" id="UP000291000">
    <property type="component" value="Unassembled WGS sequence"/>
</dbReference>
<dbReference type="Proteomes" id="UP000694566">
    <property type="component" value="Unplaced"/>
</dbReference>
<dbReference type="GO" id="GO:0005615">
    <property type="term" value="C:extracellular space"/>
    <property type="evidence" value="ECO:0007669"/>
    <property type="project" value="TreeGrafter"/>
</dbReference>
<dbReference type="GO" id="GO:0005179">
    <property type="term" value="F:hormone activity"/>
    <property type="evidence" value="ECO:0007669"/>
    <property type="project" value="UniProtKB-KW"/>
</dbReference>
<dbReference type="GO" id="GO:0005148">
    <property type="term" value="F:prolactin receptor binding"/>
    <property type="evidence" value="ECO:0000250"/>
    <property type="project" value="AgBase"/>
</dbReference>
<dbReference type="GO" id="GO:0007565">
    <property type="term" value="P:female pregnancy"/>
    <property type="evidence" value="ECO:0007669"/>
    <property type="project" value="TreeGrafter"/>
</dbReference>
<dbReference type="GO" id="GO:0007595">
    <property type="term" value="P:lactation"/>
    <property type="evidence" value="ECO:0007669"/>
    <property type="project" value="UniProtKB-KW"/>
</dbReference>
<dbReference type="GO" id="GO:0043066">
    <property type="term" value="P:negative regulation of apoptotic process"/>
    <property type="evidence" value="ECO:0000250"/>
    <property type="project" value="AgBase"/>
</dbReference>
<dbReference type="GO" id="GO:0030072">
    <property type="term" value="P:peptide hormone secretion"/>
    <property type="evidence" value="ECO:0000250"/>
    <property type="project" value="AgBase"/>
</dbReference>
<dbReference type="GO" id="GO:0008284">
    <property type="term" value="P:positive regulation of cell population proliferation"/>
    <property type="evidence" value="ECO:0007669"/>
    <property type="project" value="TreeGrafter"/>
</dbReference>
<dbReference type="GO" id="GO:0045723">
    <property type="term" value="P:positive regulation of fatty acid biosynthetic process"/>
    <property type="evidence" value="ECO:0000250"/>
    <property type="project" value="AgBase"/>
</dbReference>
<dbReference type="GO" id="GO:0010628">
    <property type="term" value="P:positive regulation of gene expression"/>
    <property type="evidence" value="ECO:0000250"/>
    <property type="project" value="AgBase"/>
</dbReference>
<dbReference type="GO" id="GO:1903489">
    <property type="term" value="P:positive regulation of lactation"/>
    <property type="evidence" value="ECO:0007669"/>
    <property type="project" value="TreeGrafter"/>
</dbReference>
<dbReference type="GO" id="GO:0046427">
    <property type="term" value="P:positive regulation of receptor signaling pathway via JAK-STAT"/>
    <property type="evidence" value="ECO:0007669"/>
    <property type="project" value="TreeGrafter"/>
</dbReference>
<dbReference type="GO" id="GO:0031667">
    <property type="term" value="P:response to nutrient levels"/>
    <property type="evidence" value="ECO:0007669"/>
    <property type="project" value="TreeGrafter"/>
</dbReference>
<dbReference type="CDD" id="cd10288">
    <property type="entry name" value="prolactin_like"/>
    <property type="match status" value="1"/>
</dbReference>
<dbReference type="FunFam" id="1.20.1250.10:FF:000003">
    <property type="entry name" value="Prolactin"/>
    <property type="match status" value="1"/>
</dbReference>
<dbReference type="Gene3D" id="1.20.1250.10">
    <property type="match status" value="1"/>
</dbReference>
<dbReference type="InterPro" id="IPR009079">
    <property type="entry name" value="4_helix_cytokine-like_core"/>
</dbReference>
<dbReference type="InterPro" id="IPR001400">
    <property type="entry name" value="Somatotropin/Prolactin"/>
</dbReference>
<dbReference type="InterPro" id="IPR018116">
    <property type="entry name" value="Somatotropin_CS"/>
</dbReference>
<dbReference type="PANTHER" id="PTHR11417:SF5">
    <property type="entry name" value="PROLACTIN"/>
    <property type="match status" value="1"/>
</dbReference>
<dbReference type="PANTHER" id="PTHR11417">
    <property type="entry name" value="SOMATOTROPIN,PROLACTIN"/>
    <property type="match status" value="1"/>
</dbReference>
<dbReference type="Pfam" id="PF00103">
    <property type="entry name" value="Hormone_1"/>
    <property type="match status" value="1"/>
</dbReference>
<dbReference type="PRINTS" id="PR00836">
    <property type="entry name" value="SOMATOTROPIN"/>
</dbReference>
<dbReference type="SUPFAM" id="SSF47266">
    <property type="entry name" value="4-helical cytokines"/>
    <property type="match status" value="1"/>
</dbReference>
<dbReference type="PROSITE" id="PS00266">
    <property type="entry name" value="SOMATOTROPIN_1"/>
    <property type="match status" value="1"/>
</dbReference>
<dbReference type="PROSITE" id="PS00338">
    <property type="entry name" value="SOMATOTROPIN_2"/>
    <property type="match status" value="1"/>
</dbReference>
<organism>
    <name type="scientific">Capra hircus</name>
    <name type="common">Goat</name>
    <dbReference type="NCBI Taxonomy" id="9925"/>
    <lineage>
        <taxon>Eukaryota</taxon>
        <taxon>Metazoa</taxon>
        <taxon>Chordata</taxon>
        <taxon>Craniata</taxon>
        <taxon>Vertebrata</taxon>
        <taxon>Euteleostomi</taxon>
        <taxon>Mammalia</taxon>
        <taxon>Eutheria</taxon>
        <taxon>Laurasiatheria</taxon>
        <taxon>Artiodactyla</taxon>
        <taxon>Ruminantia</taxon>
        <taxon>Pecora</taxon>
        <taxon>Bovidae</taxon>
        <taxon>Caprinae</taxon>
        <taxon>Capra</taxon>
    </lineage>
</organism>
<evidence type="ECO:0000250" key="1"/>
<evidence type="ECO:0000250" key="2">
    <source>
        <dbReference type="UniProtKB" id="P01236"/>
    </source>
</evidence>
<evidence type="ECO:0000250" key="3">
    <source>
        <dbReference type="UniProtKB" id="P01239"/>
    </source>
</evidence>
<evidence type="ECO:0000305" key="4"/>
<name>PRL_CAPHI</name>
<protein>
    <recommendedName>
        <fullName>Prolactin</fullName>
        <shortName>PRL</shortName>
    </recommendedName>
</protein>
<proteinExistence type="evidence at transcript level"/>